<proteinExistence type="evidence at protein level"/>
<accession>O58762</accession>
<feature type="chain" id="PRO_0000405300" description="Trehalose synthase">
    <location>
        <begin position="1"/>
        <end position="415"/>
    </location>
</feature>
<feature type="strand" evidence="7">
    <location>
        <begin position="3"/>
        <end position="5"/>
    </location>
</feature>
<feature type="helix" evidence="6">
    <location>
        <begin position="15"/>
        <end position="18"/>
    </location>
</feature>
<feature type="helix" evidence="6">
    <location>
        <begin position="19"/>
        <end position="35"/>
    </location>
</feature>
<feature type="turn" evidence="6">
    <location>
        <begin position="36"/>
        <end position="39"/>
    </location>
</feature>
<feature type="strand" evidence="6">
    <location>
        <begin position="41"/>
        <end position="47"/>
    </location>
</feature>
<feature type="strand" evidence="6">
    <location>
        <begin position="49"/>
        <end position="52"/>
    </location>
</feature>
<feature type="helix" evidence="6">
    <location>
        <begin position="54"/>
        <end position="67"/>
    </location>
</feature>
<feature type="strand" evidence="6">
    <location>
        <begin position="71"/>
        <end position="76"/>
    </location>
</feature>
<feature type="helix" evidence="6">
    <location>
        <begin position="81"/>
        <end position="94"/>
    </location>
</feature>
<feature type="helix" evidence="6">
    <location>
        <begin position="104"/>
        <end position="119"/>
    </location>
</feature>
<feature type="helix" evidence="6">
    <location>
        <begin position="123"/>
        <end position="125"/>
    </location>
</feature>
<feature type="strand" evidence="6">
    <location>
        <begin position="126"/>
        <end position="134"/>
    </location>
</feature>
<feature type="helix" evidence="6">
    <location>
        <begin position="137"/>
        <end position="142"/>
    </location>
</feature>
<feature type="strand" evidence="6">
    <location>
        <begin position="149"/>
        <end position="152"/>
    </location>
</feature>
<feature type="helix" evidence="6">
    <location>
        <begin position="162"/>
        <end position="172"/>
    </location>
</feature>
<feature type="strand" evidence="6">
    <location>
        <begin position="175"/>
        <end position="182"/>
    </location>
</feature>
<feature type="helix" evidence="6">
    <location>
        <begin position="183"/>
        <end position="185"/>
    </location>
</feature>
<feature type="turn" evidence="6">
    <location>
        <begin position="192"/>
        <end position="194"/>
    </location>
</feature>
<feature type="strand" evidence="6">
    <location>
        <begin position="195"/>
        <end position="197"/>
    </location>
</feature>
<feature type="turn" evidence="6">
    <location>
        <begin position="207"/>
        <end position="209"/>
    </location>
</feature>
<feature type="helix" evidence="6">
    <location>
        <begin position="214"/>
        <end position="223"/>
    </location>
</feature>
<feature type="strand" evidence="6">
    <location>
        <begin position="232"/>
        <end position="236"/>
    </location>
</feature>
<feature type="helix" evidence="6">
    <location>
        <begin position="245"/>
        <end position="258"/>
    </location>
</feature>
<feature type="strand" evidence="6">
    <location>
        <begin position="263"/>
        <end position="268"/>
    </location>
</feature>
<feature type="helix" evidence="6">
    <location>
        <begin position="275"/>
        <end position="288"/>
    </location>
</feature>
<feature type="strand" evidence="6">
    <location>
        <begin position="294"/>
        <end position="298"/>
    </location>
</feature>
<feature type="helix" evidence="6">
    <location>
        <begin position="299"/>
        <end position="301"/>
    </location>
</feature>
<feature type="helix" evidence="6">
    <location>
        <begin position="305"/>
        <end position="314"/>
    </location>
</feature>
<feature type="strand" evidence="6">
    <location>
        <begin position="316"/>
        <end position="320"/>
    </location>
</feature>
<feature type="helix" evidence="6">
    <location>
        <begin position="329"/>
        <end position="336"/>
    </location>
</feature>
<feature type="strand" evidence="6">
    <location>
        <begin position="341"/>
        <end position="345"/>
    </location>
</feature>
<feature type="helix" evidence="6">
    <location>
        <begin position="347"/>
        <end position="352"/>
    </location>
</feature>
<feature type="turn" evidence="6">
    <location>
        <begin position="355"/>
        <end position="357"/>
    </location>
</feature>
<feature type="strand" evidence="6">
    <location>
        <begin position="358"/>
        <end position="364"/>
    </location>
</feature>
<feature type="helix" evidence="6">
    <location>
        <begin position="365"/>
        <end position="377"/>
    </location>
</feature>
<feature type="helix" evidence="6">
    <location>
        <begin position="379"/>
        <end position="396"/>
    </location>
</feature>
<feature type="helix" evidence="6">
    <location>
        <begin position="399"/>
        <end position="411"/>
    </location>
</feature>
<evidence type="ECO:0000250" key="1">
    <source>
        <dbReference type="UniProtKB" id="Q7LYW5"/>
    </source>
</evidence>
<evidence type="ECO:0000269" key="2">
    <source>
    </source>
</evidence>
<evidence type="ECO:0000303" key="3">
    <source>
    </source>
</evidence>
<evidence type="ECO:0000305" key="4"/>
<evidence type="ECO:0000312" key="5">
    <source>
        <dbReference type="EMBL" id="BAA30133.1"/>
    </source>
</evidence>
<evidence type="ECO:0007829" key="6">
    <source>
        <dbReference type="PDB" id="2X6Q"/>
    </source>
</evidence>
<evidence type="ECO:0007829" key="7">
    <source>
        <dbReference type="PDB" id="2X6R"/>
    </source>
</evidence>
<reference evidence="5" key="1">
    <citation type="journal article" date="1998" name="DNA Res.">
        <title>Complete sequence and gene organization of the genome of a hyper-thermophilic archaebacterium, Pyrococcus horikoshii OT3.</title>
        <authorList>
            <person name="Kawarabayasi Y."/>
            <person name="Sawada M."/>
            <person name="Horikawa H."/>
            <person name="Haikawa Y."/>
            <person name="Hino Y."/>
            <person name="Yamamoto S."/>
            <person name="Sekine M."/>
            <person name="Baba S."/>
            <person name="Kosugi H."/>
            <person name="Hosoyama A."/>
            <person name="Nagai Y."/>
            <person name="Sakai M."/>
            <person name="Ogura K."/>
            <person name="Otsuka R."/>
            <person name="Nakazawa H."/>
            <person name="Takamiya M."/>
            <person name="Ohfuku Y."/>
            <person name="Funahashi T."/>
            <person name="Tanaka T."/>
            <person name="Kudoh Y."/>
            <person name="Yamazaki J."/>
            <person name="Kushida N."/>
            <person name="Oguchi A."/>
            <person name="Aoki K."/>
            <person name="Yoshizawa T."/>
            <person name="Nakamura Y."/>
            <person name="Robb F.T."/>
            <person name="Horikoshi K."/>
            <person name="Masuchi Y."/>
            <person name="Shizuya H."/>
            <person name="Kikuchi H."/>
        </authorList>
    </citation>
    <scope>NUCLEOTIDE SEQUENCE [LARGE SCALE GENOMIC DNA]</scope>
    <source>
        <strain>ATCC 700860 / DSM 12428 / JCM 9974 / NBRC 100139 / OT-3</strain>
    </source>
</reference>
<reference evidence="4" key="2">
    <citation type="journal article" date="2005" name="Biochem. Biophys. Res. Commun.">
        <title>A novel trehalose-synthesizing glycosyltransferase from Pyrococcus horikoshii: molecular cloning and characterization.</title>
        <authorList>
            <person name="Ryu S.I."/>
            <person name="Park C.S."/>
            <person name="Cha J."/>
            <person name="Woo E.J."/>
            <person name="Lee S.B."/>
        </authorList>
    </citation>
    <scope>FUNCTION</scope>
    <scope>CATALYTIC ACTIVITY</scope>
    <scope>BIOPHYSICOCHEMICAL PROPERTIES</scope>
    <source>
        <strain evidence="2">ATCC 700860 / DSM 12428 / JCM 9974 / NBRC 100139 / OT-3</strain>
    </source>
</reference>
<organism>
    <name type="scientific">Pyrococcus horikoshii (strain ATCC 700860 / DSM 12428 / JCM 9974 / NBRC 100139 / OT-3)</name>
    <dbReference type="NCBI Taxonomy" id="70601"/>
    <lineage>
        <taxon>Archaea</taxon>
        <taxon>Methanobacteriati</taxon>
        <taxon>Methanobacteriota</taxon>
        <taxon>Thermococci</taxon>
        <taxon>Thermococcales</taxon>
        <taxon>Thermococcaceae</taxon>
        <taxon>Pyrococcus</taxon>
    </lineage>
</organism>
<name>TRET_PYRHO</name>
<sequence>MMYEVKEFSSGKRKLEDYKSIIGEEEVSKIQEKAEKLKGRSFVHVNSTSFGGGVAEILHSLVPLLRSIGIEARWFVIEGPTEFFNVTKTFHNALQGNESLKLTEEMKELYLNVNRENSKFIDLSSFDYVLVHDPQPAALIEFYEKKSPWLWRCHIDLSSPNREFWEFLRRFVEKYDRYIFHLPEYVQPELDRNKAVIMPPSIDPLSEKNVELKQTEILRILERFDVDPEKPIITQVSRFDPWKGIFDVIEIYRKVKEKIPGVQLLLVGVMAHDDPEGWIYFEKTLRKIGEDYDVKVLTNLIGVHAREVNAFQRASDVILQMSIREGFGLTVTEAMWKGKPVIGRAVGGIKFQIVDGETGFLVRDANEAVEKVLYLLKHPEVSKEMGAKAKERVRKNFIITKHMERYLDILNSLGG</sequence>
<keyword id="KW-0002">3D-structure</keyword>
<keyword id="KW-0119">Carbohydrate metabolism</keyword>
<keyword id="KW-0313">Glucose metabolism</keyword>
<keyword id="KW-0328">Glycosyltransferase</keyword>
<keyword id="KW-0460">Magnesium</keyword>
<keyword id="KW-0808">Transferase</keyword>
<protein>
    <recommendedName>
        <fullName evidence="1">Trehalose synthase</fullName>
        <ecNumber>2.4.1.245</ecNumber>
    </recommendedName>
    <alternativeName>
        <fullName evidence="3">Trehalose-synthesizing glycosyltransferase</fullName>
    </alternativeName>
</protein>
<dbReference type="EC" id="2.4.1.245"/>
<dbReference type="EMBL" id="BA000001">
    <property type="protein sequence ID" value="BAA30133.1"/>
    <property type="molecule type" value="Genomic_DNA"/>
</dbReference>
<dbReference type="PIR" id="G71096">
    <property type="entry name" value="G71096"/>
</dbReference>
<dbReference type="PDB" id="2X6Q">
    <property type="method" value="X-ray"/>
    <property type="resolution" value="2.20 A"/>
    <property type="chains" value="A/B=2-415"/>
</dbReference>
<dbReference type="PDB" id="2X6R">
    <property type="method" value="X-ray"/>
    <property type="resolution" value="2.20 A"/>
    <property type="chains" value="A/B=2-415"/>
</dbReference>
<dbReference type="PDB" id="2XA1">
    <property type="method" value="X-ray"/>
    <property type="resolution" value="2.47 A"/>
    <property type="chains" value="A/B=2-415"/>
</dbReference>
<dbReference type="PDB" id="2XA2">
    <property type="method" value="X-ray"/>
    <property type="resolution" value="2.50 A"/>
    <property type="chains" value="A/B=2-415"/>
</dbReference>
<dbReference type="PDB" id="2XA9">
    <property type="method" value="X-ray"/>
    <property type="resolution" value="2.50 A"/>
    <property type="chains" value="A/B=2-415"/>
</dbReference>
<dbReference type="PDB" id="2XMP">
    <property type="method" value="X-ray"/>
    <property type="resolution" value="2.50 A"/>
    <property type="chains" value="A/B=2-415"/>
</dbReference>
<dbReference type="PDBsum" id="2X6Q"/>
<dbReference type="PDBsum" id="2X6R"/>
<dbReference type="PDBsum" id="2XA1"/>
<dbReference type="PDBsum" id="2XA2"/>
<dbReference type="PDBsum" id="2XA9"/>
<dbReference type="PDBsum" id="2XMP"/>
<dbReference type="SMR" id="O58762"/>
<dbReference type="STRING" id="70601.gene:9377993"/>
<dbReference type="CAZy" id="GT4">
    <property type="family name" value="Glycosyltransferase Family 4"/>
</dbReference>
<dbReference type="DNASU" id="1443358"/>
<dbReference type="EnsemblBacteria" id="BAA30133">
    <property type="protein sequence ID" value="BAA30133"/>
    <property type="gene ID" value="BAA30133"/>
</dbReference>
<dbReference type="KEGG" id="pho:PH1035"/>
<dbReference type="eggNOG" id="arCOG01407">
    <property type="taxonomic scope" value="Archaea"/>
</dbReference>
<dbReference type="BRENDA" id="2.4.1.245">
    <property type="organism ID" value="5244"/>
</dbReference>
<dbReference type="EvolutionaryTrace" id="O58762"/>
<dbReference type="Proteomes" id="UP000000752">
    <property type="component" value="Chromosome"/>
</dbReference>
<dbReference type="GO" id="GO:0102986">
    <property type="term" value="F:trehalose synthase activity"/>
    <property type="evidence" value="ECO:0007669"/>
    <property type="project" value="UniProtKB-EC"/>
</dbReference>
<dbReference type="GO" id="GO:0006006">
    <property type="term" value="P:glucose metabolic process"/>
    <property type="evidence" value="ECO:0007669"/>
    <property type="project" value="UniProtKB-KW"/>
</dbReference>
<dbReference type="Gene3D" id="3.40.50.2000">
    <property type="entry name" value="Glycogen Phosphorylase B"/>
    <property type="match status" value="2"/>
</dbReference>
<dbReference type="InterPro" id="IPR001296">
    <property type="entry name" value="Glyco_trans_1"/>
</dbReference>
<dbReference type="InterPro" id="IPR052078">
    <property type="entry name" value="Trehalose_Metab_GTase"/>
</dbReference>
<dbReference type="InterPro" id="IPR053462">
    <property type="entry name" value="Trehalose_synthase_GT"/>
</dbReference>
<dbReference type="InterPro" id="IPR049438">
    <property type="entry name" value="TreT_GT1"/>
</dbReference>
<dbReference type="NCBIfam" id="NF041139">
    <property type="entry name" value="TreT_Thcocales"/>
    <property type="match status" value="1"/>
</dbReference>
<dbReference type="PANTHER" id="PTHR47779">
    <property type="entry name" value="SYNTHASE (CCG-9), PUTATIVE (AFU_ORTHOLOGUE AFUA_3G12100)-RELATED"/>
    <property type="match status" value="1"/>
</dbReference>
<dbReference type="PANTHER" id="PTHR47779:SF1">
    <property type="entry name" value="SYNTHASE (CCG-9), PUTATIVE (AFU_ORTHOLOGUE AFUA_3G12100)-RELATED"/>
    <property type="match status" value="1"/>
</dbReference>
<dbReference type="Pfam" id="PF00534">
    <property type="entry name" value="Glycos_transf_1"/>
    <property type="match status" value="1"/>
</dbReference>
<dbReference type="Pfam" id="PF21269">
    <property type="entry name" value="TreT_GT1"/>
    <property type="match status" value="1"/>
</dbReference>
<dbReference type="SUPFAM" id="SSF53756">
    <property type="entry name" value="UDP-Glycosyltransferase/glycogen phosphorylase"/>
    <property type="match status" value="1"/>
</dbReference>
<comment type="function">
    <text evidence="2">Synthesizes trehalose from ADP-, UDP- or GDP-glucose and glucose.</text>
</comment>
<comment type="catalytic activity">
    <reaction evidence="2">
        <text>an NDP-alpha-D-glucose + D-glucose = alpha,alpha-trehalose + a ribonucleoside 5'-diphosphate + H(+)</text>
        <dbReference type="Rhea" id="RHEA:47416"/>
        <dbReference type="ChEBI" id="CHEBI:4167"/>
        <dbReference type="ChEBI" id="CHEBI:15378"/>
        <dbReference type="ChEBI" id="CHEBI:16551"/>
        <dbReference type="ChEBI" id="CHEBI:57930"/>
        <dbReference type="ChEBI" id="CHEBI:76533"/>
        <dbReference type="EC" id="2.4.1.245"/>
    </reaction>
</comment>
<comment type="cofactor">
    <cofactor evidence="1">
        <name>Mg(2+)</name>
        <dbReference type="ChEBI" id="CHEBI:18420"/>
    </cofactor>
</comment>
<comment type="biophysicochemical properties">
    <phDependence>
        <text evidence="2">Optimum pH is 5.5. Stable from pH 5 to pH 8.</text>
    </phDependence>
    <temperatureDependence>
        <text evidence="2">Not thermostable. Approximately 25% of maximum activity remains after 1 hour incubation at 55 degrees Celsius.</text>
    </temperatureDependence>
</comment>
<comment type="subunit">
    <text evidence="1">Homodimer.</text>
</comment>
<comment type="similarity">
    <text evidence="4">Belongs to the glycosyltransferase group 1 family. Glycosyltransferase 4 subfamily.</text>
</comment>
<gene>
    <name evidence="1" type="primary">treT</name>
    <name type="ordered locus">PH1035</name>
</gene>